<reference key="1">
    <citation type="journal article" date="1988" name="J. Gen. Virol.">
        <title>The complete DNA sequence of the long unique region in the genome of herpes simplex virus type 1.</title>
        <authorList>
            <person name="McGeoch D.J."/>
            <person name="Dalrymple M.A."/>
            <person name="Davison A.J."/>
            <person name="Dolan A."/>
            <person name="Frame M.C."/>
            <person name="McNab D."/>
            <person name="Perry L.J."/>
            <person name="Scott J.E."/>
            <person name="Taylor P."/>
        </authorList>
    </citation>
    <scope>NUCLEOTIDE SEQUENCE [LARGE SCALE GENOMIC DNA]</scope>
</reference>
<reference key="2">
    <citation type="journal article" date="1988" name="J. Virol.">
        <title>Structures of herpes simplex virus type 1 genes required for replication of virus DNA.</title>
        <authorList>
            <person name="McGeoch D.J."/>
            <person name="Dalrymple M.A."/>
            <person name="Dolan A."/>
            <person name="McNab D."/>
            <person name="Perry L.J."/>
            <person name="Taylor P."/>
            <person name="Challberg M.D."/>
        </authorList>
    </citation>
    <scope>NUCLEOTIDE SEQUENCE [GENOMIC DNA]</scope>
</reference>
<reference key="3">
    <citation type="journal article" date="2007" name="Microbes Infect.">
        <title>Determination and analysis of the DNA sequence of highly attenuated herpes simplex virus type 1 mutant HF10, a potential oncolytic virus.</title>
        <authorList>
            <person name="Ushijima Y."/>
            <person name="Luo C."/>
            <person name="Goshima F."/>
            <person name="Yamauchi Y."/>
            <person name="Kimura H."/>
            <person name="Nishiyama Y."/>
        </authorList>
    </citation>
    <scope>NUCLEOTIDE SEQUENCE [LARGE SCALE GENOMIC DNA]</scope>
    <source>
        <strain>Nonneuroinvasive mutant HF10</strain>
    </source>
</reference>
<reference key="4">
    <citation type="submission" date="2008-12" db="EMBL/GenBank/DDBJ databases">
        <title>Herpes simplex virus type 1 bacterial artificial chromosome.</title>
        <authorList>
            <person name="Cunningham C."/>
            <person name="Davison A.J."/>
        </authorList>
    </citation>
    <scope>NUCLEOTIDE SEQUENCE [LARGE SCALE GENOMIC DNA]</scope>
    <source>
        <strain>17 syn+</strain>
    </source>
</reference>
<reference key="5">
    <citation type="journal article" date="1989" name="Proc. Natl. Acad. Sci. U.S.A.">
        <title>Herpes simplex virus 1 helicase-primase: a complex of three herpes-encoded gene products.</title>
        <authorList>
            <person name="Crute J.J."/>
            <person name="Tsurumi T."/>
            <person name="Zhu L.A."/>
            <person name="Weller S.K."/>
            <person name="Olivo P.D."/>
            <person name="Challberg M.D."/>
            <person name="Mocarski E.S."/>
            <person name="Lehman I.R."/>
        </authorList>
    </citation>
    <scope>INTERACTION WITH UL8 AND UL5</scope>
</reference>
<reference key="6">
    <citation type="journal article" date="1994" name="J. Virol.">
        <title>Helicase-primase complex of herpes simplex virus type 1: a mutation in the UL52 subunit abolishes primase activity.</title>
        <authorList>
            <person name="Klinedinst D.K."/>
            <person name="Challberg M.D."/>
        </authorList>
    </citation>
    <scope>FUNCTION</scope>
    <scope>MUTAGENESIS OF ASP-628</scope>
</reference>
<reference key="7">
    <citation type="journal article" date="1995" name="J. Biol. Chem.">
        <title>Identification of the primase active site of the herpes simplex virus type 1 helicase-primase.</title>
        <authorList>
            <person name="Dracheva S."/>
            <person name="Koonin E.V."/>
            <person name="Crute J.J."/>
        </authorList>
    </citation>
    <scope>FUNCTION</scope>
</reference>
<reference key="8">
    <citation type="journal article" date="1996" name="J. Gen. Virol.">
        <title>The herpes simplex virus type 1 UL8 protein influences the intracellular localization of the UL52 but not the ICP8 or POL replication proteins in virus-infected cells.</title>
        <authorList>
            <person name="Marsden H.S."/>
            <person name="Cross A.M."/>
            <person name="Francis G.J."/>
            <person name="Patel A.H."/>
            <person name="MacEachran K."/>
            <person name="Murphy M."/>
            <person name="McVey G."/>
            <person name="Haydon D."/>
            <person name="Abbotts A."/>
            <person name="Stow N.D."/>
        </authorList>
    </citation>
    <scope>SUBCELLULAR LOCATION</scope>
</reference>
<organismHost>
    <name type="scientific">Homo sapiens</name>
    <name type="common">Human</name>
    <dbReference type="NCBI Taxonomy" id="9606"/>
</organismHost>
<protein>
    <recommendedName>
        <fullName evidence="1">DNA primase</fullName>
        <ecNumber evidence="1">2.7.7.-</ecNumber>
    </recommendedName>
</protein>
<name>PRIM_HHV11</name>
<comment type="function">
    <text evidence="1 3 4">Essential component of the helicase/primase complex. Unwinds the DNA at the replication forks and generates single-stranded DNA for both leading and lagging strand synthesis. The primase initiates primer synthesis and thereby produces large amount of short RNA primers on the lagging strand that the polymerase elongates using dNTPs.</text>
</comment>
<comment type="subunit">
    <text evidence="1 2">Associates with the helicase and the primase-associated factor to form the helicase-primase factor.</text>
</comment>
<comment type="subcellular location">
    <subcellularLocation>
        <location evidence="1 5">Host nucleus</location>
    </subcellularLocation>
    <text evidence="1 5">Requires the presence of the primase associated factor to properly localize in the host cell nucleus.</text>
</comment>
<comment type="similarity">
    <text evidence="1">Belongs to the herpesviridae DNA primase family.</text>
</comment>
<organism>
    <name type="scientific">Human herpesvirus 1 (strain 17)</name>
    <name type="common">HHV-1</name>
    <name type="synonym">Human herpes simplex virus 1</name>
    <dbReference type="NCBI Taxonomy" id="10299"/>
    <lineage>
        <taxon>Viruses</taxon>
        <taxon>Duplodnaviria</taxon>
        <taxon>Heunggongvirae</taxon>
        <taxon>Peploviricota</taxon>
        <taxon>Herviviricetes</taxon>
        <taxon>Herpesvirales</taxon>
        <taxon>Orthoherpesviridae</taxon>
        <taxon>Alphaherpesvirinae</taxon>
        <taxon>Simplexvirus</taxon>
        <taxon>Simplexvirus humanalpha1</taxon>
        <taxon>Human herpesvirus 1</taxon>
    </lineage>
</organism>
<dbReference type="EC" id="2.7.7.-" evidence="1"/>
<dbReference type="EMBL" id="X14112">
    <property type="protein sequence ID" value="CAA32288.1"/>
    <property type="molecule type" value="Genomic_DNA"/>
</dbReference>
<dbReference type="EMBL" id="AH002360">
    <property type="protein sequence ID" value="AAA45826.1"/>
    <property type="molecule type" value="Genomic_DNA"/>
</dbReference>
<dbReference type="EMBL" id="DQ889502">
    <property type="protein sequence ID" value="ABI63513.1"/>
    <property type="molecule type" value="Genomic_DNA"/>
</dbReference>
<dbReference type="EMBL" id="FJ593289">
    <property type="protein sequence ID" value="ACM62276.1"/>
    <property type="molecule type" value="Genomic_DNA"/>
</dbReference>
<dbReference type="PIR" id="E29890">
    <property type="entry name" value="WMBE52"/>
</dbReference>
<dbReference type="RefSeq" id="YP_009137128.1">
    <property type="nucleotide sequence ID" value="NC_001806.2"/>
</dbReference>
<dbReference type="BioGRID" id="971449">
    <property type="interactions" value="2"/>
</dbReference>
<dbReference type="DIP" id="DIP-1092N"/>
<dbReference type="BindingDB" id="P10236"/>
<dbReference type="ChEMBL" id="CHEMBL4380"/>
<dbReference type="DNASU" id="2703423"/>
<dbReference type="GeneID" id="2703423"/>
<dbReference type="KEGG" id="vg:2703423"/>
<dbReference type="Proteomes" id="UP000009294">
    <property type="component" value="Segment"/>
</dbReference>
<dbReference type="Proteomes" id="UP000180652">
    <property type="component" value="Segment"/>
</dbReference>
<dbReference type="GO" id="GO:0042025">
    <property type="term" value="C:host cell nucleus"/>
    <property type="evidence" value="ECO:0000314"/>
    <property type="project" value="UniProtKB"/>
</dbReference>
<dbReference type="GO" id="GO:0003899">
    <property type="term" value="F:DNA-directed RNA polymerase activity"/>
    <property type="evidence" value="ECO:0007669"/>
    <property type="project" value="InterPro"/>
</dbReference>
<dbReference type="GO" id="GO:0008270">
    <property type="term" value="F:zinc ion binding"/>
    <property type="evidence" value="ECO:0007669"/>
    <property type="project" value="UniProtKB-KW"/>
</dbReference>
<dbReference type="GO" id="GO:0039686">
    <property type="term" value="P:bidirectional double-stranded viral DNA replication"/>
    <property type="evidence" value="ECO:0000314"/>
    <property type="project" value="UniProtKB"/>
</dbReference>
<dbReference type="GO" id="GO:0006260">
    <property type="term" value="P:DNA replication"/>
    <property type="evidence" value="ECO:0007669"/>
    <property type="project" value="UniProtKB-KW"/>
</dbReference>
<dbReference type="HAMAP" id="MF_04011">
    <property type="entry name" value="HSV_PRIM"/>
    <property type="match status" value="1"/>
</dbReference>
<dbReference type="InterPro" id="IPR033685">
    <property type="entry name" value="HSV_PRIM"/>
</dbReference>
<dbReference type="Pfam" id="PF03121">
    <property type="entry name" value="Herpes_UL52"/>
    <property type="match status" value="1"/>
</dbReference>
<accession>P10236</accession>
<accession>B9VQI1</accession>
<accession>Q09I82</accession>
<sequence length="1058" mass="114424">MGQEDGNRGERRAAGTPVEVTALYATDGCVITSSIALLTNSLLGAEPVYIFSYDAYTHDGRADGPTEQDRFEESRALYQASGGLNGDSFRVTFCLLGTEVGGTHQARGRTRPMFVCRFERADDVAALQDALAHGTPLQPDHIAATLDAEATFALHANMILALTVAINNASPRTGRDAAAAQYDQGASLRSLVGRTSLGQRGLTTLYVHHEVRVLAAYRRAYYGSAQSPFWFLSKFGPDEKSLVLTTRYYLLQAQRLGGAGATYDLQAIKDICATYAIPHAPRPDTVSAASLTSFAAITRFCCTSQYARGAAAAGFPLYVERRIAADVRETSALEKFITHDRSCLRVSDREFITYIYLAHFECFSPPRLATHLRAVTTHDPNPAASTEQPSPLGREAVEQFFCHVRAQLNIGEYVKHNVTPRETVLDGDTAKAYLRARTYAPGALTPAPAYCGAVDSATKMMGRLADAEKLLVPRGWPAFAPASPGEDTAGGTPPPQTCGIVKRLLRLAATEQQGPTPPAIAALIRNAAVQTPLPVYRISMVPTGQAFAALAWDDWARITRDARLAEAVVSAEAAAHPDHGALGRRLTDRIRAQGPVMPPGGLDAGGQMYVNRNEIFNGALAITNIILDLDIALKEPVPFRRLHEALGHFRRGALAAVQLLFPAARVDPDAYPCYFFKSACRPGPASVGSGSGLGNDDDGDWFPCYDDAGDEEWAEDPGAMDTSHDPPDDEVAYFDLCHEVGPTAEPRETDSPVCSCTDKIGLRVCMPVPAPYVVHGSLTMRGVARVIQQAVLLDRDFVEAIGSYVKNFLLIDTGVYAHGHSLRLPYFAKIAPDGPACGRLLPVFVIPPACKDVPAFVAAHADPRRFHFHAPPTYLASPREIRVLHSLGGDYVSFFERKASRNALEHFGRRETLTEVLGRYNVQPDAGGTVEGFASELLGRIVACIETHFPEHAGEYQAVSVRRAVSKDDWVLLQLVPVRGTLQQSLSCLRFKHGRASRATARTFVALSVGANNRLCVSLCQQCFAAKCDSNRLHTLFTIDAGTPCSPSVPCSTSQPSS</sequence>
<keyword id="KW-0235">DNA replication</keyword>
<keyword id="KW-1048">Host nucleus</keyword>
<keyword id="KW-0479">Metal-binding</keyword>
<keyword id="KW-1185">Reference proteome</keyword>
<keyword id="KW-0808">Transferase</keyword>
<keyword id="KW-0862">Zinc</keyword>
<keyword id="KW-0863">Zinc-finger</keyword>
<gene>
    <name type="ORF">UL52</name>
</gene>
<evidence type="ECO:0000255" key="1">
    <source>
        <dbReference type="HAMAP-Rule" id="MF_04011"/>
    </source>
</evidence>
<evidence type="ECO:0000269" key="2">
    <source>
    </source>
</evidence>
<evidence type="ECO:0000269" key="3">
    <source>
    </source>
</evidence>
<evidence type="ECO:0000269" key="4">
    <source>
    </source>
</evidence>
<evidence type="ECO:0000269" key="5">
    <source>
    </source>
</evidence>
<evidence type="ECO:0000305" key="6">
    <source>
    </source>
</evidence>
<proteinExistence type="evidence at protein level"/>
<feature type="chain" id="PRO_0000116104" description="DNA primase">
    <location>
        <begin position="1"/>
        <end position="1058"/>
    </location>
</feature>
<feature type="zinc finger region" description="CHC2-type" evidence="1 6">
    <location>
        <begin position="988"/>
        <end position="1028"/>
    </location>
</feature>
<feature type="site" description="Essential for primase activity" evidence="1">
    <location>
        <position position="628"/>
    </location>
</feature>
<feature type="site" description="Essential for primase activity" evidence="1">
    <location>
        <position position="630"/>
    </location>
</feature>
<feature type="sequence variant" description="In strain: Nonneuroinvasive mutant HF10.">
    <original>V</original>
    <variation>A</variation>
    <location>
        <position position="211"/>
    </location>
</feature>
<feature type="sequence variant" description="In strain: Nonneuroinvasive mutant HF10.">
    <original>S</original>
    <variation>N</variation>
    <location>
        <position position="364"/>
    </location>
</feature>
<feature type="sequence variant" description="In strain: Nonneuroinvasive mutant HF10.">
    <original>P</original>
    <variation>T</variation>
    <location>
        <position position="515"/>
    </location>
</feature>
<feature type="mutagenesis site" description="Complete loss of primase activity." evidence="4">
    <original>D</original>
    <variation>Q</variation>
    <location>
        <position position="628"/>
    </location>
</feature>